<proteinExistence type="evidence at protein level"/>
<sequence length="11" mass="1192">FIGDIWSGIQG</sequence>
<reference evidence="3" key="1">
    <citation type="submission" date="2009-07" db="UniProtKB">
        <title>Brazilian scorpion Brotheas amazonicus venom peptidomics.</title>
        <authorList>
            <person name="Ireno I.C."/>
            <person name="Rates B.A."/>
            <person name="Pimenta A.M.C."/>
        </authorList>
    </citation>
    <scope>PROTEIN SEQUENCE</scope>
    <scope>SUBCELLULAR LOCATION</scope>
    <scope>TISSUE SPECIFICITY</scope>
    <source>
        <tissue evidence="1">Venom</tissue>
    </source>
</reference>
<protein>
    <recommendedName>
        <fullName evidence="2">Venom peptide 5</fullName>
    </recommendedName>
    <alternativeName>
        <fullName evidence="2">BaP-5</fullName>
    </alternativeName>
</protein>
<evidence type="ECO:0000269" key="1">
    <source ref="1"/>
</evidence>
<evidence type="ECO:0000303" key="2">
    <source ref="1"/>
</evidence>
<evidence type="ECO:0000305" key="3"/>
<keyword id="KW-0903">Direct protein sequencing</keyword>
<keyword id="KW-0964">Secreted</keyword>
<organism>
    <name type="scientific">Brotheas amazonicus</name>
    <name type="common">Scorpion</name>
    <dbReference type="NCBI Taxonomy" id="662117"/>
    <lineage>
        <taxon>Eukaryota</taxon>
        <taxon>Metazoa</taxon>
        <taxon>Ecdysozoa</taxon>
        <taxon>Arthropoda</taxon>
        <taxon>Chelicerata</taxon>
        <taxon>Arachnida</taxon>
        <taxon>Scorpiones</taxon>
        <taxon>Iurida</taxon>
        <taxon>Chactoidea</taxon>
        <taxon>Chactidae</taxon>
        <taxon>Brotheinae</taxon>
        <taxon>Brotheini</taxon>
        <taxon>Brotheina</taxon>
        <taxon>Brotheas</taxon>
    </lineage>
</organism>
<feature type="peptide" id="PRO_0000383658" description="Venom peptide 5" evidence="1">
    <location>
        <begin position="1" status="less than"/>
        <end position="11" status="greater than"/>
    </location>
</feature>
<feature type="non-terminal residue" evidence="2">
    <location>
        <position position="1"/>
    </location>
</feature>
<feature type="non-terminal residue" evidence="2">
    <location>
        <position position="11"/>
    </location>
</feature>
<name>VP5_BROAA</name>
<accession>P86343</accession>
<dbReference type="GO" id="GO:0005576">
    <property type="term" value="C:extracellular region"/>
    <property type="evidence" value="ECO:0007669"/>
    <property type="project" value="UniProtKB-SubCell"/>
</dbReference>
<comment type="subcellular location">
    <subcellularLocation>
        <location evidence="1">Secreted</location>
    </subcellularLocation>
</comment>
<comment type="tissue specificity">
    <text evidence="1">Expressed by the venom gland.</text>
</comment>